<reference key="1">
    <citation type="submission" date="2007-04" db="EMBL/GenBank/DDBJ databases">
        <title>Complete sequence of chromosome of Mycobacterium gilvum PYR-GCK.</title>
        <authorList>
            <consortium name="US DOE Joint Genome Institute"/>
            <person name="Copeland A."/>
            <person name="Lucas S."/>
            <person name="Lapidus A."/>
            <person name="Barry K."/>
            <person name="Detter J.C."/>
            <person name="Glavina del Rio T."/>
            <person name="Hammon N."/>
            <person name="Israni S."/>
            <person name="Dalin E."/>
            <person name="Tice H."/>
            <person name="Pitluck S."/>
            <person name="Chain P."/>
            <person name="Malfatti S."/>
            <person name="Shin M."/>
            <person name="Vergez L."/>
            <person name="Schmutz J."/>
            <person name="Larimer F."/>
            <person name="Land M."/>
            <person name="Hauser L."/>
            <person name="Kyrpides N."/>
            <person name="Mikhailova N."/>
            <person name="Miller C."/>
            <person name="Richardson P."/>
        </authorList>
    </citation>
    <scope>NUCLEOTIDE SEQUENCE [LARGE SCALE GENOMIC DNA]</scope>
    <source>
        <strain>PYR-GCK</strain>
    </source>
</reference>
<name>RS8_MYCGI</name>
<keyword id="KW-0687">Ribonucleoprotein</keyword>
<keyword id="KW-0689">Ribosomal protein</keyword>
<keyword id="KW-0694">RNA-binding</keyword>
<keyword id="KW-0699">rRNA-binding</keyword>
<feature type="chain" id="PRO_1000085930" description="Small ribosomal subunit protein uS8">
    <location>
        <begin position="1"/>
        <end position="132"/>
    </location>
</feature>
<organism>
    <name type="scientific">Mycolicibacterium gilvum (strain PYR-GCK)</name>
    <name type="common">Mycobacterium gilvum (strain PYR-GCK)</name>
    <dbReference type="NCBI Taxonomy" id="350054"/>
    <lineage>
        <taxon>Bacteria</taxon>
        <taxon>Bacillati</taxon>
        <taxon>Actinomycetota</taxon>
        <taxon>Actinomycetes</taxon>
        <taxon>Mycobacteriales</taxon>
        <taxon>Mycobacteriaceae</taxon>
        <taxon>Mycolicibacterium</taxon>
    </lineage>
</organism>
<evidence type="ECO:0000255" key="1">
    <source>
        <dbReference type="HAMAP-Rule" id="MF_01302"/>
    </source>
</evidence>
<evidence type="ECO:0000305" key="2"/>
<sequence>MTMTDPIADFLTRLRNANSAYHDEVTLPHSKIKANIAEILKSEGYISDYRTEDARVGKSLVVQLKYGPSRERSIAGLRRVSKPGLRVYAKSTNLPRVLGGLGVAIISTSSGLRTDRQASREGVGGEVLAYVW</sequence>
<protein>
    <recommendedName>
        <fullName evidence="1">Small ribosomal subunit protein uS8</fullName>
    </recommendedName>
    <alternativeName>
        <fullName evidence="2">30S ribosomal protein S8</fullName>
    </alternativeName>
</protein>
<gene>
    <name evidence="1" type="primary">rpsH</name>
    <name type="ordered locus">Mflv_5033</name>
</gene>
<dbReference type="EMBL" id="CP000656">
    <property type="protein sequence ID" value="ABP47499.1"/>
    <property type="molecule type" value="Genomic_DNA"/>
</dbReference>
<dbReference type="SMR" id="A4TEC3"/>
<dbReference type="STRING" id="350054.Mflv_5033"/>
<dbReference type="KEGG" id="mgi:Mflv_5033"/>
<dbReference type="eggNOG" id="COG0096">
    <property type="taxonomic scope" value="Bacteria"/>
</dbReference>
<dbReference type="HOGENOM" id="CLU_098428_0_1_11"/>
<dbReference type="OrthoDB" id="9802617at2"/>
<dbReference type="GO" id="GO:1990904">
    <property type="term" value="C:ribonucleoprotein complex"/>
    <property type="evidence" value="ECO:0007669"/>
    <property type="project" value="UniProtKB-KW"/>
</dbReference>
<dbReference type="GO" id="GO:0005840">
    <property type="term" value="C:ribosome"/>
    <property type="evidence" value="ECO:0007669"/>
    <property type="project" value="UniProtKB-KW"/>
</dbReference>
<dbReference type="GO" id="GO:0019843">
    <property type="term" value="F:rRNA binding"/>
    <property type="evidence" value="ECO:0007669"/>
    <property type="project" value="UniProtKB-UniRule"/>
</dbReference>
<dbReference type="GO" id="GO:0003735">
    <property type="term" value="F:structural constituent of ribosome"/>
    <property type="evidence" value="ECO:0007669"/>
    <property type="project" value="InterPro"/>
</dbReference>
<dbReference type="GO" id="GO:0006412">
    <property type="term" value="P:translation"/>
    <property type="evidence" value="ECO:0007669"/>
    <property type="project" value="UniProtKB-UniRule"/>
</dbReference>
<dbReference type="FunFam" id="3.30.1370.30:FF:000002">
    <property type="entry name" value="30S ribosomal protein S8"/>
    <property type="match status" value="1"/>
</dbReference>
<dbReference type="FunFam" id="3.30.1490.10:FF:000001">
    <property type="entry name" value="30S ribosomal protein S8"/>
    <property type="match status" value="1"/>
</dbReference>
<dbReference type="Gene3D" id="3.30.1370.30">
    <property type="match status" value="1"/>
</dbReference>
<dbReference type="Gene3D" id="3.30.1490.10">
    <property type="match status" value="1"/>
</dbReference>
<dbReference type="HAMAP" id="MF_01302_B">
    <property type="entry name" value="Ribosomal_uS8_B"/>
    <property type="match status" value="1"/>
</dbReference>
<dbReference type="InterPro" id="IPR000630">
    <property type="entry name" value="Ribosomal_uS8"/>
</dbReference>
<dbReference type="InterPro" id="IPR035987">
    <property type="entry name" value="Ribosomal_uS8_sf"/>
</dbReference>
<dbReference type="NCBIfam" id="NF001109">
    <property type="entry name" value="PRK00136.1"/>
    <property type="match status" value="1"/>
</dbReference>
<dbReference type="PANTHER" id="PTHR11758">
    <property type="entry name" value="40S RIBOSOMAL PROTEIN S15A"/>
    <property type="match status" value="1"/>
</dbReference>
<dbReference type="Pfam" id="PF00410">
    <property type="entry name" value="Ribosomal_S8"/>
    <property type="match status" value="1"/>
</dbReference>
<dbReference type="SUPFAM" id="SSF56047">
    <property type="entry name" value="Ribosomal protein S8"/>
    <property type="match status" value="1"/>
</dbReference>
<comment type="function">
    <text evidence="1">One of the primary rRNA binding proteins, it binds directly to 16S rRNA central domain where it helps coordinate assembly of the platform of the 30S subunit.</text>
</comment>
<comment type="subunit">
    <text evidence="1">Part of the 30S ribosomal subunit. Contacts proteins S5 and S12.</text>
</comment>
<comment type="similarity">
    <text evidence="1">Belongs to the universal ribosomal protein uS8 family.</text>
</comment>
<proteinExistence type="inferred from homology"/>
<accession>A4TEC3</accession>